<sequence>MGHYSHSDIEEAVKSAKKEGLKDYLYQEPHGKKRSHKKSHRTHKKSRSHKKSYCSHKKSRSHKKSFCSHKKSRSHKKSYCSHKKSRSHKKSYRSHKKSRSYKKSYRSYKKSRSYKKSCRSYKKSRSYKKSYCSHKKKSRSYKKSCRTHKKSYRSHKKYYKKPHHHCDDYKRHDDYDSKKEYWKDGNCWVVKKKYK</sequence>
<organism>
    <name type="scientific">Bacillus subtilis (strain 168)</name>
    <dbReference type="NCBI Taxonomy" id="224308"/>
    <lineage>
        <taxon>Bacteria</taxon>
        <taxon>Bacillati</taxon>
        <taxon>Bacillota</taxon>
        <taxon>Bacilli</taxon>
        <taxon>Bacillales</taxon>
        <taxon>Bacillaceae</taxon>
        <taxon>Bacillus</taxon>
    </lineage>
</organism>
<feature type="chain" id="PRO_0000079263" description="Spore coat protein G">
    <location>
        <begin position="1"/>
        <end position="195"/>
    </location>
</feature>
<feature type="repeat" description="1">
    <location>
        <begin position="36"/>
        <end position="48"/>
    </location>
</feature>
<feature type="repeat" description="2">
    <location>
        <begin position="49"/>
        <end position="61"/>
    </location>
</feature>
<feature type="repeat" description="3">
    <location>
        <begin position="62"/>
        <end position="74"/>
    </location>
</feature>
<feature type="repeat" description="4">
    <location>
        <begin position="75"/>
        <end position="87"/>
    </location>
</feature>
<feature type="repeat" description="5">
    <location>
        <begin position="88"/>
        <end position="100"/>
    </location>
</feature>
<feature type="repeat" description="6">
    <location>
        <begin position="101"/>
        <end position="113"/>
    </location>
</feature>
<feature type="repeat" description="7">
    <location>
        <begin position="114"/>
        <end position="126"/>
    </location>
</feature>
<feature type="repeat" description="8; approximate">
    <location>
        <begin position="127"/>
        <end position="140"/>
    </location>
</feature>
<feature type="repeat" description="9; approximate">
    <location>
        <begin position="141"/>
        <end position="154"/>
    </location>
</feature>
<feature type="region of interest" description="Disordered" evidence="1">
    <location>
        <begin position="1"/>
        <end position="163"/>
    </location>
</feature>
<feature type="region of interest" description="9 X 13 AA approximate tandem repeats of [HY]-K-K-S-[HYFC]-[RC]-[TS]-[HY]-K-K-S-R-S">
    <location>
        <begin position="36"/>
        <end position="154"/>
    </location>
</feature>
<feature type="compositionally biased region" description="Basic and acidic residues" evidence="1">
    <location>
        <begin position="1"/>
        <end position="22"/>
    </location>
</feature>
<feature type="compositionally biased region" description="Basic residues" evidence="1">
    <location>
        <begin position="31"/>
        <end position="163"/>
    </location>
</feature>
<accession>P39801</accession>
<dbReference type="EMBL" id="U14964">
    <property type="protein sequence ID" value="AAA66209.1"/>
    <property type="molecule type" value="Genomic_DNA"/>
</dbReference>
<dbReference type="EMBL" id="Z93767">
    <property type="protein sequence ID" value="CAB07799.1"/>
    <property type="molecule type" value="Genomic_DNA"/>
</dbReference>
<dbReference type="EMBL" id="AL009126">
    <property type="protein sequence ID" value="CAB15624.1"/>
    <property type="molecule type" value="Genomic_DNA"/>
</dbReference>
<dbReference type="PIR" id="I40534">
    <property type="entry name" value="I40534"/>
</dbReference>
<dbReference type="RefSeq" id="NP_391488.1">
    <property type="nucleotide sequence ID" value="NC_000964.3"/>
</dbReference>
<dbReference type="RefSeq" id="WP_010886627.1">
    <property type="nucleotide sequence ID" value="NZ_OZ025638.1"/>
</dbReference>
<dbReference type="SMR" id="P39801"/>
<dbReference type="FunCoup" id="P39801">
    <property type="interactions" value="143"/>
</dbReference>
<dbReference type="STRING" id="224308.BSU36070"/>
<dbReference type="PaxDb" id="224308-BSU36070"/>
<dbReference type="EnsemblBacteria" id="CAB15624">
    <property type="protein sequence ID" value="CAB15624"/>
    <property type="gene ID" value="BSU_36070"/>
</dbReference>
<dbReference type="GeneID" id="936865"/>
<dbReference type="KEGG" id="bsu:BSU36070"/>
<dbReference type="InParanoid" id="P39801"/>
<dbReference type="OrthoDB" id="2944080at2"/>
<dbReference type="BioCyc" id="BSUB:BSU36070-MONOMER"/>
<dbReference type="Proteomes" id="UP000001570">
    <property type="component" value="Chromosome"/>
</dbReference>
<dbReference type="GO" id="GO:0030435">
    <property type="term" value="P:sporulation resulting in formation of a cellular spore"/>
    <property type="evidence" value="ECO:0007669"/>
    <property type="project" value="UniProtKB-KW"/>
</dbReference>
<dbReference type="NCBIfam" id="NF047410">
    <property type="entry name" value="CotG_ExsB_Nterm"/>
    <property type="match status" value="1"/>
</dbReference>
<dbReference type="NCBIfam" id="NF047411">
    <property type="entry name" value="spore_coat_G"/>
    <property type="match status" value="1"/>
</dbReference>
<keyword id="KW-0903">Direct protein sequencing</keyword>
<keyword id="KW-1185">Reference proteome</keyword>
<keyword id="KW-0677">Repeat</keyword>
<keyword id="KW-0749">Sporulation</keyword>
<gene>
    <name type="primary">cotG</name>
    <name type="ordered locus">BSU36070</name>
</gene>
<proteinExistence type="evidence at protein level"/>
<comment type="function">
    <text>May be a morphogenetic protein that is required for the incorporation of protein CotB into the spore coat.</text>
</comment>
<comment type="subunit">
    <text evidence="2">Homodimer.</text>
</comment>
<protein>
    <recommendedName>
        <fullName>Spore coat protein G</fullName>
    </recommendedName>
</protein>
<reference key="1">
    <citation type="journal article" date="1995" name="J. Bacteriol.">
        <title>An additional GerE-controlled gene encoding an abundant spore coat protein from Bacillus subtilis.</title>
        <authorList>
            <person name="Sacco M."/>
            <person name="Ricca E."/>
            <person name="Losick R."/>
            <person name="Cutting S.M."/>
        </authorList>
    </citation>
    <scope>NUCLEOTIDE SEQUENCE [GENOMIC DNA]</scope>
    <scope>PROTEIN SEQUENCE OF 3-27</scope>
    <source>
        <strain>168 / PY79</strain>
    </source>
</reference>
<reference key="2">
    <citation type="journal article" date="1997" name="Microbiology">
        <title>The Bacillus subtilis genome from gerBC (311 degrees) to licR (334 degrees).</title>
        <authorList>
            <person name="Presecan E."/>
            <person name="Moszer I."/>
            <person name="Boursier L."/>
            <person name="Cruz Ramos H."/>
            <person name="De La Fuente V."/>
            <person name="Hullo M.-F."/>
            <person name="Lelong C."/>
            <person name="Schleich S."/>
            <person name="Sekowska A."/>
            <person name="Song B.H."/>
            <person name="Villani G."/>
            <person name="Kunst F."/>
            <person name="Danchin A."/>
            <person name="Glaser P."/>
        </authorList>
    </citation>
    <scope>NUCLEOTIDE SEQUENCE [GENOMIC DNA]</scope>
    <source>
        <strain>168</strain>
    </source>
</reference>
<reference key="3">
    <citation type="journal article" date="1997" name="Nature">
        <title>The complete genome sequence of the Gram-positive bacterium Bacillus subtilis.</title>
        <authorList>
            <person name="Kunst F."/>
            <person name="Ogasawara N."/>
            <person name="Moszer I."/>
            <person name="Albertini A.M."/>
            <person name="Alloni G."/>
            <person name="Azevedo V."/>
            <person name="Bertero M.G."/>
            <person name="Bessieres P."/>
            <person name="Bolotin A."/>
            <person name="Borchert S."/>
            <person name="Borriss R."/>
            <person name="Boursier L."/>
            <person name="Brans A."/>
            <person name="Braun M."/>
            <person name="Brignell S.C."/>
            <person name="Bron S."/>
            <person name="Brouillet S."/>
            <person name="Bruschi C.V."/>
            <person name="Caldwell B."/>
            <person name="Capuano V."/>
            <person name="Carter N.M."/>
            <person name="Choi S.-K."/>
            <person name="Codani J.-J."/>
            <person name="Connerton I.F."/>
            <person name="Cummings N.J."/>
            <person name="Daniel R.A."/>
            <person name="Denizot F."/>
            <person name="Devine K.M."/>
            <person name="Duesterhoeft A."/>
            <person name="Ehrlich S.D."/>
            <person name="Emmerson P.T."/>
            <person name="Entian K.-D."/>
            <person name="Errington J."/>
            <person name="Fabret C."/>
            <person name="Ferrari E."/>
            <person name="Foulger D."/>
            <person name="Fritz C."/>
            <person name="Fujita M."/>
            <person name="Fujita Y."/>
            <person name="Fuma S."/>
            <person name="Galizzi A."/>
            <person name="Galleron N."/>
            <person name="Ghim S.-Y."/>
            <person name="Glaser P."/>
            <person name="Goffeau A."/>
            <person name="Golightly E.J."/>
            <person name="Grandi G."/>
            <person name="Guiseppi G."/>
            <person name="Guy B.J."/>
            <person name="Haga K."/>
            <person name="Haiech J."/>
            <person name="Harwood C.R."/>
            <person name="Henaut A."/>
            <person name="Hilbert H."/>
            <person name="Holsappel S."/>
            <person name="Hosono S."/>
            <person name="Hullo M.-F."/>
            <person name="Itaya M."/>
            <person name="Jones L.-M."/>
            <person name="Joris B."/>
            <person name="Karamata D."/>
            <person name="Kasahara Y."/>
            <person name="Klaerr-Blanchard M."/>
            <person name="Klein C."/>
            <person name="Kobayashi Y."/>
            <person name="Koetter P."/>
            <person name="Koningstein G."/>
            <person name="Krogh S."/>
            <person name="Kumano M."/>
            <person name="Kurita K."/>
            <person name="Lapidus A."/>
            <person name="Lardinois S."/>
            <person name="Lauber J."/>
            <person name="Lazarevic V."/>
            <person name="Lee S.-M."/>
            <person name="Levine A."/>
            <person name="Liu H."/>
            <person name="Masuda S."/>
            <person name="Mauel C."/>
            <person name="Medigue C."/>
            <person name="Medina N."/>
            <person name="Mellado R.P."/>
            <person name="Mizuno M."/>
            <person name="Moestl D."/>
            <person name="Nakai S."/>
            <person name="Noback M."/>
            <person name="Noone D."/>
            <person name="O'Reilly M."/>
            <person name="Ogawa K."/>
            <person name="Ogiwara A."/>
            <person name="Oudega B."/>
            <person name="Park S.-H."/>
            <person name="Parro V."/>
            <person name="Pohl T.M."/>
            <person name="Portetelle D."/>
            <person name="Porwollik S."/>
            <person name="Prescott A.M."/>
            <person name="Presecan E."/>
            <person name="Pujic P."/>
            <person name="Purnelle B."/>
            <person name="Rapoport G."/>
            <person name="Rey M."/>
            <person name="Reynolds S."/>
            <person name="Rieger M."/>
            <person name="Rivolta C."/>
            <person name="Rocha E."/>
            <person name="Roche B."/>
            <person name="Rose M."/>
            <person name="Sadaie Y."/>
            <person name="Sato T."/>
            <person name="Scanlan E."/>
            <person name="Schleich S."/>
            <person name="Schroeter R."/>
            <person name="Scoffone F."/>
            <person name="Sekiguchi J."/>
            <person name="Sekowska A."/>
            <person name="Seror S.J."/>
            <person name="Serror P."/>
            <person name="Shin B.-S."/>
            <person name="Soldo B."/>
            <person name="Sorokin A."/>
            <person name="Tacconi E."/>
            <person name="Takagi T."/>
            <person name="Takahashi H."/>
            <person name="Takemaru K."/>
            <person name="Takeuchi M."/>
            <person name="Tamakoshi A."/>
            <person name="Tanaka T."/>
            <person name="Terpstra P."/>
            <person name="Tognoni A."/>
            <person name="Tosato V."/>
            <person name="Uchiyama S."/>
            <person name="Vandenbol M."/>
            <person name="Vannier F."/>
            <person name="Vassarotti A."/>
            <person name="Viari A."/>
            <person name="Wambutt R."/>
            <person name="Wedler E."/>
            <person name="Wedler H."/>
            <person name="Weitzenegger T."/>
            <person name="Winters P."/>
            <person name="Wipat A."/>
            <person name="Yamamoto H."/>
            <person name="Yamane K."/>
            <person name="Yasumoto K."/>
            <person name="Yata K."/>
            <person name="Yoshida K."/>
            <person name="Yoshikawa H.-F."/>
            <person name="Zumstein E."/>
            <person name="Yoshikawa H."/>
            <person name="Danchin A."/>
        </authorList>
    </citation>
    <scope>NUCLEOTIDE SEQUENCE [LARGE SCALE GENOMIC DNA]</scope>
    <source>
        <strain>168</strain>
    </source>
</reference>
<evidence type="ECO:0000256" key="1">
    <source>
        <dbReference type="SAM" id="MobiDB-lite"/>
    </source>
</evidence>
<evidence type="ECO:0000305" key="2"/>
<name>COTG_BACSU</name>